<proteinExistence type="inferred from homology"/>
<feature type="transit peptide" description="Mitochondrion" evidence="3">
    <location>
        <begin position="1"/>
        <end position="8"/>
    </location>
</feature>
<feature type="chain" id="PRO_0000042747" description="Succinate dehydrogenase assembly factor 3, mitochondrial">
    <location>
        <begin position="9"/>
        <end position="130"/>
    </location>
</feature>
<protein>
    <recommendedName>
        <fullName evidence="1">Succinate dehydrogenase assembly factor 3, mitochondrial</fullName>
        <shortName evidence="1">SDH assembly factor 3</shortName>
        <shortName evidence="1">SDHAF3</shortName>
    </recommendedName>
</protein>
<reference key="1">
    <citation type="journal article" date="2007" name="Science">
        <title>The Fusarium graminearum genome reveals a link between localized polymorphism and pathogen specialization.</title>
        <authorList>
            <person name="Cuomo C.A."/>
            <person name="Gueldener U."/>
            <person name="Xu J.-R."/>
            <person name="Trail F."/>
            <person name="Turgeon B.G."/>
            <person name="Di Pietro A."/>
            <person name="Walton J.D."/>
            <person name="Ma L.-J."/>
            <person name="Baker S.E."/>
            <person name="Rep M."/>
            <person name="Adam G."/>
            <person name="Antoniw J."/>
            <person name="Baldwin T."/>
            <person name="Calvo S.E."/>
            <person name="Chang Y.-L."/>
            <person name="DeCaprio D."/>
            <person name="Gale L.R."/>
            <person name="Gnerre S."/>
            <person name="Goswami R.S."/>
            <person name="Hammond-Kosack K."/>
            <person name="Harris L.J."/>
            <person name="Hilburn K."/>
            <person name="Kennell J.C."/>
            <person name="Kroken S."/>
            <person name="Magnuson J.K."/>
            <person name="Mannhaupt G."/>
            <person name="Mauceli E.W."/>
            <person name="Mewes H.-W."/>
            <person name="Mitterbauer R."/>
            <person name="Muehlbauer G."/>
            <person name="Muensterkoetter M."/>
            <person name="Nelson D."/>
            <person name="O'Donnell K."/>
            <person name="Ouellet T."/>
            <person name="Qi W."/>
            <person name="Quesneville H."/>
            <person name="Roncero M.I.G."/>
            <person name="Seong K.-Y."/>
            <person name="Tetko I.V."/>
            <person name="Urban M."/>
            <person name="Waalwijk C."/>
            <person name="Ward T.J."/>
            <person name="Yao J."/>
            <person name="Birren B.W."/>
            <person name="Kistler H.C."/>
        </authorList>
    </citation>
    <scope>NUCLEOTIDE SEQUENCE [LARGE SCALE GENOMIC DNA]</scope>
    <source>
        <strain>ATCC MYA-4620 / CBS 123657 / FGSC 9075 / NRRL 31084 / PH-1</strain>
    </source>
</reference>
<reference key="2">
    <citation type="journal article" date="2010" name="Nature">
        <title>Comparative genomics reveals mobile pathogenicity chromosomes in Fusarium.</title>
        <authorList>
            <person name="Ma L.-J."/>
            <person name="van der Does H.C."/>
            <person name="Borkovich K.A."/>
            <person name="Coleman J.J."/>
            <person name="Daboussi M.-J."/>
            <person name="Di Pietro A."/>
            <person name="Dufresne M."/>
            <person name="Freitag M."/>
            <person name="Grabherr M."/>
            <person name="Henrissat B."/>
            <person name="Houterman P.M."/>
            <person name="Kang S."/>
            <person name="Shim W.-B."/>
            <person name="Woloshuk C."/>
            <person name="Xie X."/>
            <person name="Xu J.-R."/>
            <person name="Antoniw J."/>
            <person name="Baker S.E."/>
            <person name="Bluhm B.H."/>
            <person name="Breakspear A."/>
            <person name="Brown D.W."/>
            <person name="Butchko R.A.E."/>
            <person name="Chapman S."/>
            <person name="Coulson R."/>
            <person name="Coutinho P.M."/>
            <person name="Danchin E.G.J."/>
            <person name="Diener A."/>
            <person name="Gale L.R."/>
            <person name="Gardiner D.M."/>
            <person name="Goff S."/>
            <person name="Hammond-Kosack K.E."/>
            <person name="Hilburn K."/>
            <person name="Hua-Van A."/>
            <person name="Jonkers W."/>
            <person name="Kazan K."/>
            <person name="Kodira C.D."/>
            <person name="Koehrsen M."/>
            <person name="Kumar L."/>
            <person name="Lee Y.-H."/>
            <person name="Li L."/>
            <person name="Manners J.M."/>
            <person name="Miranda-Saavedra D."/>
            <person name="Mukherjee M."/>
            <person name="Park G."/>
            <person name="Park J."/>
            <person name="Park S.-Y."/>
            <person name="Proctor R.H."/>
            <person name="Regev A."/>
            <person name="Ruiz-Roldan M.C."/>
            <person name="Sain D."/>
            <person name="Sakthikumar S."/>
            <person name="Sykes S."/>
            <person name="Schwartz D.C."/>
            <person name="Turgeon B.G."/>
            <person name="Wapinski I."/>
            <person name="Yoder O."/>
            <person name="Young S."/>
            <person name="Zeng Q."/>
            <person name="Zhou S."/>
            <person name="Galagan J."/>
            <person name="Cuomo C.A."/>
            <person name="Kistler H.C."/>
            <person name="Rep M."/>
        </authorList>
    </citation>
    <scope>GENOME REANNOTATION</scope>
    <source>
        <strain>ATCC MYA-4620 / CBS 123657 / FGSC 9075 / NRRL 31084 / PH-1</strain>
    </source>
</reference>
<reference key="3">
    <citation type="journal article" date="2015" name="BMC Genomics">
        <title>The completed genome sequence of the pathogenic ascomycete fungus Fusarium graminearum.</title>
        <authorList>
            <person name="King R."/>
            <person name="Urban M."/>
            <person name="Hammond-Kosack M.C.U."/>
            <person name="Hassani-Pak K."/>
            <person name="Hammond-Kosack K.E."/>
        </authorList>
    </citation>
    <scope>NUCLEOTIDE SEQUENCE [LARGE SCALE GENOMIC DNA]</scope>
    <source>
        <strain>ATCC MYA-4620 / CBS 123657 / FGSC 9075 / NRRL 31084 / PH-1</strain>
    </source>
</reference>
<keyword id="KW-0143">Chaperone</keyword>
<keyword id="KW-0312">Gluconeogenesis</keyword>
<keyword id="KW-0496">Mitochondrion</keyword>
<keyword id="KW-1185">Reference proteome</keyword>
<keyword id="KW-0809">Transit peptide</keyword>
<organism>
    <name type="scientific">Gibberella zeae (strain ATCC MYA-4620 / CBS 123657 / FGSC 9075 / NRRL 31084 / PH-1)</name>
    <name type="common">Wheat head blight fungus</name>
    <name type="synonym">Fusarium graminearum</name>
    <dbReference type="NCBI Taxonomy" id="229533"/>
    <lineage>
        <taxon>Eukaryota</taxon>
        <taxon>Fungi</taxon>
        <taxon>Dikarya</taxon>
        <taxon>Ascomycota</taxon>
        <taxon>Pezizomycotina</taxon>
        <taxon>Sordariomycetes</taxon>
        <taxon>Hypocreomycetidae</taxon>
        <taxon>Hypocreales</taxon>
        <taxon>Nectriaceae</taxon>
        <taxon>Fusarium</taxon>
    </lineage>
</organism>
<accession>Q4IN52</accession>
<accession>A0A0E0RQF1</accession>
<accession>V6QYC0</accession>
<sequence length="130" mass="15103">MRPSLLRLASATSTQRGLKPNPMALLPPIPLYRRLLRAHRKHLPPDMRILGDEYIKAEFRAHRKVDNPAHLIGFLTEWQMYAQKIEGDQWVGDKLDEQKLSKMSDEQIQQLYELMQAIQNRGKEGGEQES</sequence>
<dbReference type="EMBL" id="DS231663">
    <property type="protein sequence ID" value="ESU06662.1"/>
    <property type="molecule type" value="Genomic_DNA"/>
</dbReference>
<dbReference type="EMBL" id="HG970332">
    <property type="protein sequence ID" value="CEF73476.1"/>
    <property type="molecule type" value="Genomic_DNA"/>
</dbReference>
<dbReference type="RefSeq" id="XP_011317147.1">
    <property type="nucleotide sequence ID" value="XM_011318845.1"/>
</dbReference>
<dbReference type="SMR" id="Q4IN52"/>
<dbReference type="FunCoup" id="Q4IN52">
    <property type="interactions" value="261"/>
</dbReference>
<dbReference type="STRING" id="229533.Q4IN52"/>
<dbReference type="GeneID" id="23548799"/>
<dbReference type="KEGG" id="fgr:FGSG_01356"/>
<dbReference type="VEuPathDB" id="FungiDB:FGRAMPH1_01G03343"/>
<dbReference type="eggNOG" id="KOG4100">
    <property type="taxonomic scope" value="Eukaryota"/>
</dbReference>
<dbReference type="HOGENOM" id="CLU_102310_1_0_1"/>
<dbReference type="InParanoid" id="Q4IN52"/>
<dbReference type="OrthoDB" id="85701at110618"/>
<dbReference type="Proteomes" id="UP000070720">
    <property type="component" value="Chromosome 1"/>
</dbReference>
<dbReference type="GO" id="GO:0005758">
    <property type="term" value="C:mitochondrial intermembrane space"/>
    <property type="evidence" value="ECO:0007669"/>
    <property type="project" value="TreeGrafter"/>
</dbReference>
<dbReference type="GO" id="GO:0005759">
    <property type="term" value="C:mitochondrial matrix"/>
    <property type="evidence" value="ECO:0007669"/>
    <property type="project" value="UniProtKB-SubCell"/>
</dbReference>
<dbReference type="GO" id="GO:0006094">
    <property type="term" value="P:gluconeogenesis"/>
    <property type="evidence" value="ECO:0007669"/>
    <property type="project" value="UniProtKB-KW"/>
</dbReference>
<dbReference type="GO" id="GO:0034553">
    <property type="term" value="P:mitochondrial respiratory chain complex II assembly"/>
    <property type="evidence" value="ECO:0007669"/>
    <property type="project" value="InterPro"/>
</dbReference>
<dbReference type="GO" id="GO:0006105">
    <property type="term" value="P:succinate metabolic process"/>
    <property type="evidence" value="ECO:0007669"/>
    <property type="project" value="TreeGrafter"/>
</dbReference>
<dbReference type="CDD" id="cd20270">
    <property type="entry name" value="Complex1_LYR_SDHAF3_LYRM10"/>
    <property type="match status" value="1"/>
</dbReference>
<dbReference type="InterPro" id="IPR008381">
    <property type="entry name" value="SDHAF3/Sdh7"/>
</dbReference>
<dbReference type="PANTHER" id="PTHR13137">
    <property type="entry name" value="DC11 ACN9 HOMOLOG"/>
    <property type="match status" value="1"/>
</dbReference>
<dbReference type="PANTHER" id="PTHR13137:SF6">
    <property type="entry name" value="SUCCINATE DEHYDROGENASE ASSEMBLY FACTOR 3, MITOCHONDRIAL"/>
    <property type="match status" value="1"/>
</dbReference>
<dbReference type="Pfam" id="PF13233">
    <property type="entry name" value="Complex1_LYR_2"/>
    <property type="match status" value="1"/>
</dbReference>
<gene>
    <name type="ORF">FGRRES_01356</name>
    <name type="ORF">FGSG_01356</name>
</gene>
<comment type="function">
    <text evidence="1 2">Plays an essential role in the assembly of succinate dehydrogenase (SDH), an enzyme complex (also referred to as respiratory complex II) that is a component of both the tricarboxylic acid (TCA) cycle and the mitochondrial electron transport chain, and which couples the oxidation of succinate to fumarate with the reduction of ubiquinone (coenzyme Q) to ubiquinol. Promotes maturation of the iron-sulfur protein subunit of the SDH catalytic dimer, protecting it from the deleterious effects of oxidants. May act together with SDHAF1.</text>
</comment>
<comment type="subunit">
    <text evidence="1">Interacts with the iron-sulfur protein subunit within the SDH catalytic dimer.</text>
</comment>
<comment type="subcellular location">
    <subcellularLocation>
        <location evidence="1">Mitochondrion matrix</location>
    </subcellularLocation>
</comment>
<comment type="similarity">
    <text evidence="4">Belongs to the complex I LYR family. SDHAF3 subfamily.</text>
</comment>
<name>SDHF3_GIBZE</name>
<evidence type="ECO:0000250" key="1">
    <source>
        <dbReference type="UniProtKB" id="Q04401"/>
    </source>
</evidence>
<evidence type="ECO:0000250" key="2">
    <source>
        <dbReference type="UniProtKB" id="Q8SZ16"/>
    </source>
</evidence>
<evidence type="ECO:0000255" key="3"/>
<evidence type="ECO:0000305" key="4"/>